<accession>Q5TG30</accession>
<name>RHG40_HUMAN</name>
<proteinExistence type="evidence at protein level"/>
<organism>
    <name type="scientific">Homo sapiens</name>
    <name type="common">Human</name>
    <dbReference type="NCBI Taxonomy" id="9606"/>
    <lineage>
        <taxon>Eukaryota</taxon>
        <taxon>Metazoa</taxon>
        <taxon>Chordata</taxon>
        <taxon>Craniata</taxon>
        <taxon>Vertebrata</taxon>
        <taxon>Euteleostomi</taxon>
        <taxon>Mammalia</taxon>
        <taxon>Eutheria</taxon>
        <taxon>Euarchontoglires</taxon>
        <taxon>Primates</taxon>
        <taxon>Haplorrhini</taxon>
        <taxon>Catarrhini</taxon>
        <taxon>Hominidae</taxon>
        <taxon>Homo</taxon>
    </lineage>
</organism>
<feature type="chain" id="PRO_0000331532" description="Rho GTPase-activating protein 40">
    <location>
        <begin position="1"/>
        <end position="675"/>
    </location>
</feature>
<feature type="domain" description="Rho-GAP" evidence="2">
    <location>
        <begin position="323"/>
        <end position="522"/>
    </location>
</feature>
<feature type="region of interest" description="Disordered" evidence="3">
    <location>
        <begin position="95"/>
        <end position="118"/>
    </location>
</feature>
<feature type="region of interest" description="Disordered" evidence="3">
    <location>
        <begin position="187"/>
        <end position="218"/>
    </location>
</feature>
<feature type="compositionally biased region" description="Acidic residues" evidence="3">
    <location>
        <begin position="103"/>
        <end position="116"/>
    </location>
</feature>
<feature type="site" description="Arginine finger; crucial for GTP hydrolysis by stabilizing the transition state" evidence="2">
    <location>
        <position position="364"/>
    </location>
</feature>
<feature type="sequence variant" id="VAR_042892" description="In dbSNP:rs6100455.">
    <original>G</original>
    <variation>R</variation>
    <location>
        <position position="186"/>
    </location>
</feature>
<feature type="sequence variant" id="VAR_042893" description="In dbSNP:rs6070872.">
    <original>R</original>
    <variation>L</variation>
    <location>
        <position position="466"/>
    </location>
</feature>
<feature type="sequence variant" id="VAR_042894" description="In dbSNP:rs16987460.">
    <original>H</original>
    <variation>N</variation>
    <location>
        <position position="516"/>
    </location>
</feature>
<evidence type="ECO:0000250" key="1"/>
<evidence type="ECO:0000255" key="2">
    <source>
        <dbReference type="PROSITE-ProRule" id="PRU00172"/>
    </source>
</evidence>
<evidence type="ECO:0000256" key="3">
    <source>
        <dbReference type="SAM" id="MobiDB-lite"/>
    </source>
</evidence>
<evidence type="ECO:0000305" key="4"/>
<evidence type="ECO:0000312" key="5">
    <source>
        <dbReference type="HGNC" id="HGNC:16226"/>
    </source>
</evidence>
<keyword id="KW-0343">GTPase activation</keyword>
<keyword id="KW-1267">Proteomics identification</keyword>
<keyword id="KW-1185">Reference proteome</keyword>
<protein>
    <recommendedName>
        <fullName evidence="4">Rho GTPase-activating protein 40</fullName>
    </recommendedName>
    <alternativeName>
        <fullName>Rho-type GTPase-activating protein 40</fullName>
    </alternativeName>
</protein>
<gene>
    <name evidence="5" type="primary">ARHGAP40</name>
    <name type="synonym">C20orf95</name>
</gene>
<dbReference type="EMBL" id="AL035419">
    <property type="status" value="NOT_ANNOTATED_CDS"/>
    <property type="molecule type" value="Genomic_DNA"/>
</dbReference>
<dbReference type="RefSeq" id="NP_001157903.2">
    <property type="nucleotide sequence ID" value="NM_001164431.3"/>
</dbReference>
<dbReference type="SMR" id="Q5TG30"/>
<dbReference type="FunCoup" id="Q5TG30">
    <property type="interactions" value="1032"/>
</dbReference>
<dbReference type="IntAct" id="Q5TG30">
    <property type="interactions" value="2"/>
</dbReference>
<dbReference type="STRING" id="9606.ENSP00000362442"/>
<dbReference type="PhosphoSitePlus" id="Q5TG30"/>
<dbReference type="BioMuta" id="ARHGAP40"/>
<dbReference type="DMDM" id="187611445"/>
<dbReference type="jPOST" id="Q5TG30"/>
<dbReference type="MassIVE" id="Q5TG30"/>
<dbReference type="PaxDb" id="9606-ENSP00000362442"/>
<dbReference type="PeptideAtlas" id="Q5TG30"/>
<dbReference type="ProteomicsDB" id="65092"/>
<dbReference type="Antibodypedia" id="51585">
    <property type="antibodies" value="54 antibodies from 8 providers"/>
</dbReference>
<dbReference type="Ensembl" id="ENST00000373345.9">
    <property type="protein sequence ID" value="ENSP00000362442.5"/>
    <property type="gene ID" value="ENSG00000124143.11"/>
</dbReference>
<dbReference type="GeneID" id="343578"/>
<dbReference type="MANE-Select" id="ENST00000373345.9">
    <property type="protein sequence ID" value="ENSP00000362442.5"/>
    <property type="RefSeq nucleotide sequence ID" value="NM_001164431.3"/>
    <property type="RefSeq protein sequence ID" value="NP_001157903.2"/>
</dbReference>
<dbReference type="UCSC" id="uc061wyy.1">
    <property type="organism name" value="human"/>
</dbReference>
<dbReference type="AGR" id="HGNC:16226"/>
<dbReference type="GeneCards" id="ARHGAP40"/>
<dbReference type="HGNC" id="HGNC:16226">
    <property type="gene designation" value="ARHGAP40"/>
</dbReference>
<dbReference type="HPA" id="ENSG00000124143">
    <property type="expression patterns" value="Group enriched (breast, epididymis, esophagus, skin)"/>
</dbReference>
<dbReference type="neXtProt" id="NX_Q5TG30"/>
<dbReference type="OpenTargets" id="ENSG00000124143"/>
<dbReference type="VEuPathDB" id="HostDB:ENSG00000124143"/>
<dbReference type="eggNOG" id="KOG2200">
    <property type="taxonomic scope" value="Eukaryota"/>
</dbReference>
<dbReference type="GeneTree" id="ENSGT00940000162174"/>
<dbReference type="InParanoid" id="Q5TG30"/>
<dbReference type="OrthoDB" id="27680at2759"/>
<dbReference type="PAN-GO" id="Q5TG30">
    <property type="GO annotations" value="4 GO annotations based on evolutionary models"/>
</dbReference>
<dbReference type="PhylomeDB" id="Q5TG30"/>
<dbReference type="TreeFam" id="TF314044"/>
<dbReference type="PathwayCommons" id="Q5TG30"/>
<dbReference type="Reactome" id="R-HSA-8980692">
    <property type="pathway name" value="RHOA GTPase cycle"/>
</dbReference>
<dbReference type="Reactome" id="R-HSA-9013148">
    <property type="pathway name" value="CDC42 GTPase cycle"/>
</dbReference>
<dbReference type="SignaLink" id="Q5TG30"/>
<dbReference type="SIGNOR" id="Q5TG30"/>
<dbReference type="ChiTaRS" id="ARHGAP40">
    <property type="organism name" value="human"/>
</dbReference>
<dbReference type="Pharos" id="Q5TG30">
    <property type="development level" value="Tdark"/>
</dbReference>
<dbReference type="PRO" id="PR:Q5TG30"/>
<dbReference type="Proteomes" id="UP000005640">
    <property type="component" value="Chromosome 20"/>
</dbReference>
<dbReference type="RNAct" id="Q5TG30">
    <property type="molecule type" value="protein"/>
</dbReference>
<dbReference type="Bgee" id="ENSG00000124143">
    <property type="expression patterns" value="Expressed in lower esophagus mucosa and 62 other cell types or tissues"/>
</dbReference>
<dbReference type="ExpressionAtlas" id="Q5TG30">
    <property type="expression patterns" value="baseline and differential"/>
</dbReference>
<dbReference type="GO" id="GO:0005737">
    <property type="term" value="C:cytoplasm"/>
    <property type="evidence" value="ECO:0000318"/>
    <property type="project" value="GO_Central"/>
</dbReference>
<dbReference type="GO" id="GO:0005829">
    <property type="term" value="C:cytosol"/>
    <property type="evidence" value="ECO:0000304"/>
    <property type="project" value="Reactome"/>
</dbReference>
<dbReference type="GO" id="GO:0005096">
    <property type="term" value="F:GTPase activator activity"/>
    <property type="evidence" value="ECO:0000318"/>
    <property type="project" value="GO_Central"/>
</dbReference>
<dbReference type="GO" id="GO:0030833">
    <property type="term" value="P:regulation of actin filament polymerization"/>
    <property type="evidence" value="ECO:0000318"/>
    <property type="project" value="GO_Central"/>
</dbReference>
<dbReference type="GO" id="GO:0051056">
    <property type="term" value="P:regulation of small GTPase mediated signal transduction"/>
    <property type="evidence" value="ECO:0000318"/>
    <property type="project" value="GO_Central"/>
</dbReference>
<dbReference type="GO" id="GO:0007165">
    <property type="term" value="P:signal transduction"/>
    <property type="evidence" value="ECO:0007669"/>
    <property type="project" value="InterPro"/>
</dbReference>
<dbReference type="FunFam" id="1.10.555.10:FF:000018">
    <property type="entry name" value="Rho GTPase activating protein 28"/>
    <property type="match status" value="1"/>
</dbReference>
<dbReference type="Gene3D" id="1.10.555.10">
    <property type="entry name" value="Rho GTPase activation protein"/>
    <property type="match status" value="1"/>
</dbReference>
<dbReference type="InterPro" id="IPR008936">
    <property type="entry name" value="Rho_GTPase_activation_prot"/>
</dbReference>
<dbReference type="InterPro" id="IPR000198">
    <property type="entry name" value="RhoGAP_dom"/>
</dbReference>
<dbReference type="PANTHER" id="PTHR14963">
    <property type="entry name" value="RHO GTPASE ACTIVATING PROTEIN 18,19-RELATED"/>
    <property type="match status" value="1"/>
</dbReference>
<dbReference type="PANTHER" id="PTHR14963:SF4">
    <property type="entry name" value="RHO GTPASE-ACTIVATING PROTEIN 40"/>
    <property type="match status" value="1"/>
</dbReference>
<dbReference type="Pfam" id="PF00620">
    <property type="entry name" value="RhoGAP"/>
    <property type="match status" value="1"/>
</dbReference>
<dbReference type="Pfam" id="PF25442">
    <property type="entry name" value="Ubiquitin_RHG40_C"/>
    <property type="match status" value="1"/>
</dbReference>
<dbReference type="SMART" id="SM00324">
    <property type="entry name" value="RhoGAP"/>
    <property type="match status" value="1"/>
</dbReference>
<dbReference type="SUPFAM" id="SSF48350">
    <property type="entry name" value="GTPase activation domain, GAP"/>
    <property type="match status" value="1"/>
</dbReference>
<dbReference type="PROSITE" id="PS50238">
    <property type="entry name" value="RHOGAP"/>
    <property type="match status" value="1"/>
</dbReference>
<sequence>MAEPALLPAAQMERLAPGPLASPCPRIPRARIARRCAQRWADLGCSSGPSSGRMDQLPQKNLLRLHPAGSAGCSTGVESSSMDGFWMEVEQIQQRDELREEDSGGNEGQLPEEGEAESQWLQDTGLSGLLGGLGLDGDHQELLSTLTQTQVAAVCRRLDIYARSVRRQHKTPVRDVRDVFGVFNSGKMSSENGDSGMKGAQLSSGASKFPPAAEPGGLQEQAGREEAFNMDSAYSEQAAVLLQRSRPSRGGTSAWGKCSLPKFTVPKGRLGVTRIGDLSLQDMRKVPSLALIELTALCDILGLDLKRSKAGKWKAAETRLFGVPLDSLLEADHKVLPSTQVPLVLQALLSCLEKRGLDMEGILRVPGSQARVKGLEQKLERDFYAGLFSWDEVHHNDASDLLKRFIRKLPTPLLTAEYLPAFAVVPNIPNLKQRLQVLHLLILILPEPNRNALKALLEFLRKVVAREQHNKMTLRNVSTVMAPNLFLHQGRPPKLPKGKEKQLAEGAAEVVQIMVHYQDLLWTVASFLVAQVRKLNDSSSRRPQLCDAGLKTWLRRMHADRDKAGDGLEATPKVAKIQVVWPIKDPLKVPLTPSTKVAHVLRQFTEHLSPGSKGQEDSEDMDSLLLHHRSMESANILLYEVGGNINEHRLDPDAYLLDLYRANPHGEWVLKQNPT</sequence>
<reference key="1">
    <citation type="journal article" date="2001" name="Nature">
        <title>The DNA sequence and comparative analysis of human chromosome 20.</title>
        <authorList>
            <person name="Deloukas P."/>
            <person name="Matthews L.H."/>
            <person name="Ashurst J.L."/>
            <person name="Burton J."/>
            <person name="Gilbert J.G.R."/>
            <person name="Jones M."/>
            <person name="Stavrides G."/>
            <person name="Almeida J.P."/>
            <person name="Babbage A.K."/>
            <person name="Bagguley C.L."/>
            <person name="Bailey J."/>
            <person name="Barlow K.F."/>
            <person name="Bates K.N."/>
            <person name="Beard L.M."/>
            <person name="Beare D.M."/>
            <person name="Beasley O.P."/>
            <person name="Bird C.P."/>
            <person name="Blakey S.E."/>
            <person name="Bridgeman A.M."/>
            <person name="Brown A.J."/>
            <person name="Buck D."/>
            <person name="Burrill W.D."/>
            <person name="Butler A.P."/>
            <person name="Carder C."/>
            <person name="Carter N.P."/>
            <person name="Chapman J.C."/>
            <person name="Clamp M."/>
            <person name="Clark G."/>
            <person name="Clark L.N."/>
            <person name="Clark S.Y."/>
            <person name="Clee C.M."/>
            <person name="Clegg S."/>
            <person name="Cobley V.E."/>
            <person name="Collier R.E."/>
            <person name="Connor R.E."/>
            <person name="Corby N.R."/>
            <person name="Coulson A."/>
            <person name="Coville G.J."/>
            <person name="Deadman R."/>
            <person name="Dhami P.D."/>
            <person name="Dunn M."/>
            <person name="Ellington A.G."/>
            <person name="Frankland J.A."/>
            <person name="Fraser A."/>
            <person name="French L."/>
            <person name="Garner P."/>
            <person name="Grafham D.V."/>
            <person name="Griffiths C."/>
            <person name="Griffiths M.N.D."/>
            <person name="Gwilliam R."/>
            <person name="Hall R.E."/>
            <person name="Hammond S."/>
            <person name="Harley J.L."/>
            <person name="Heath P.D."/>
            <person name="Ho S."/>
            <person name="Holden J.L."/>
            <person name="Howden P.J."/>
            <person name="Huckle E."/>
            <person name="Hunt A.R."/>
            <person name="Hunt S.E."/>
            <person name="Jekosch K."/>
            <person name="Johnson C.M."/>
            <person name="Johnson D."/>
            <person name="Kay M.P."/>
            <person name="Kimberley A.M."/>
            <person name="King A."/>
            <person name="Knights A."/>
            <person name="Laird G.K."/>
            <person name="Lawlor S."/>
            <person name="Lehvaeslaiho M.H."/>
            <person name="Leversha M.A."/>
            <person name="Lloyd C."/>
            <person name="Lloyd D.M."/>
            <person name="Lovell J.D."/>
            <person name="Marsh V.L."/>
            <person name="Martin S.L."/>
            <person name="McConnachie L.J."/>
            <person name="McLay K."/>
            <person name="McMurray A.A."/>
            <person name="Milne S.A."/>
            <person name="Mistry D."/>
            <person name="Moore M.J.F."/>
            <person name="Mullikin J.C."/>
            <person name="Nickerson T."/>
            <person name="Oliver K."/>
            <person name="Parker A."/>
            <person name="Patel R."/>
            <person name="Pearce T.A.V."/>
            <person name="Peck A.I."/>
            <person name="Phillimore B.J.C.T."/>
            <person name="Prathalingam S.R."/>
            <person name="Plumb R.W."/>
            <person name="Ramsay H."/>
            <person name="Rice C.M."/>
            <person name="Ross M.T."/>
            <person name="Scott C.E."/>
            <person name="Sehra H.K."/>
            <person name="Shownkeen R."/>
            <person name="Sims S."/>
            <person name="Skuce C.D."/>
            <person name="Smith M.L."/>
            <person name="Soderlund C."/>
            <person name="Steward C.A."/>
            <person name="Sulston J.E."/>
            <person name="Swann R.M."/>
            <person name="Sycamore N."/>
            <person name="Taylor R."/>
            <person name="Tee L."/>
            <person name="Thomas D.W."/>
            <person name="Thorpe A."/>
            <person name="Tracey A."/>
            <person name="Tromans A.C."/>
            <person name="Vaudin M."/>
            <person name="Wall M."/>
            <person name="Wallis J.M."/>
            <person name="Whitehead S.L."/>
            <person name="Whittaker P."/>
            <person name="Willey D.L."/>
            <person name="Williams L."/>
            <person name="Williams S.A."/>
            <person name="Wilming L."/>
            <person name="Wray P.W."/>
            <person name="Hubbard T."/>
            <person name="Durbin R.M."/>
            <person name="Bentley D.R."/>
            <person name="Beck S."/>
            <person name="Rogers J."/>
        </authorList>
    </citation>
    <scope>NUCLEOTIDE SEQUENCE [LARGE SCALE GENOMIC DNA]</scope>
</reference>
<comment type="function">
    <text evidence="1">GTPase activator for the Rho-type GTPases by converting them to an inactive GDP-bound state.</text>
</comment>